<dbReference type="EC" id="7.5.2.11" evidence="1"/>
<dbReference type="EMBL" id="CP000057">
    <property type="protein sequence ID" value="AAX87870.1"/>
    <property type="molecule type" value="Genomic_DNA"/>
</dbReference>
<dbReference type="RefSeq" id="WP_005652432.1">
    <property type="nucleotide sequence ID" value="NC_007146.2"/>
</dbReference>
<dbReference type="SMR" id="Q4QM77"/>
<dbReference type="GeneID" id="93219864"/>
<dbReference type="KEGG" id="hit:NTHI0988"/>
<dbReference type="HOGENOM" id="CLU_000604_92_3_6"/>
<dbReference type="Proteomes" id="UP000002525">
    <property type="component" value="Chromosome"/>
</dbReference>
<dbReference type="GO" id="GO:0005886">
    <property type="term" value="C:plasma membrane"/>
    <property type="evidence" value="ECO:0007669"/>
    <property type="project" value="UniProtKB-SubCell"/>
</dbReference>
<dbReference type="GO" id="GO:0005524">
    <property type="term" value="F:ATP binding"/>
    <property type="evidence" value="ECO:0007669"/>
    <property type="project" value="UniProtKB-KW"/>
</dbReference>
<dbReference type="GO" id="GO:0016887">
    <property type="term" value="F:ATP hydrolysis activity"/>
    <property type="evidence" value="ECO:0007669"/>
    <property type="project" value="InterPro"/>
</dbReference>
<dbReference type="CDD" id="cd03216">
    <property type="entry name" value="ABC_Carb_Monos_I"/>
    <property type="match status" value="1"/>
</dbReference>
<dbReference type="CDD" id="cd03215">
    <property type="entry name" value="ABC_Carb_Monos_II"/>
    <property type="match status" value="1"/>
</dbReference>
<dbReference type="FunFam" id="3.40.50.300:FF:000126">
    <property type="entry name" value="Galactose/methyl galactoside import ATP-binding protein MglA"/>
    <property type="match status" value="1"/>
</dbReference>
<dbReference type="FunFam" id="3.40.50.300:FF:000127">
    <property type="entry name" value="Ribose import ATP-binding protein RbsA"/>
    <property type="match status" value="1"/>
</dbReference>
<dbReference type="Gene3D" id="3.40.50.300">
    <property type="entry name" value="P-loop containing nucleotide triphosphate hydrolases"/>
    <property type="match status" value="2"/>
</dbReference>
<dbReference type="InterPro" id="IPR003593">
    <property type="entry name" value="AAA+_ATPase"/>
</dbReference>
<dbReference type="InterPro" id="IPR050107">
    <property type="entry name" value="ABC_carbohydrate_import_ATPase"/>
</dbReference>
<dbReference type="InterPro" id="IPR003439">
    <property type="entry name" value="ABC_transporter-like_ATP-bd"/>
</dbReference>
<dbReference type="InterPro" id="IPR017871">
    <property type="entry name" value="ABC_transporter-like_CS"/>
</dbReference>
<dbReference type="InterPro" id="IPR027417">
    <property type="entry name" value="P-loop_NTPase"/>
</dbReference>
<dbReference type="NCBIfam" id="NF008215">
    <property type="entry name" value="PRK10982.1"/>
    <property type="match status" value="1"/>
</dbReference>
<dbReference type="PANTHER" id="PTHR43790">
    <property type="entry name" value="CARBOHYDRATE TRANSPORT ATP-BINDING PROTEIN MG119-RELATED"/>
    <property type="match status" value="1"/>
</dbReference>
<dbReference type="PANTHER" id="PTHR43790:SF7">
    <property type="entry name" value="GALACTOSE_METHYL GALACTOSIDE IMPORT ATP-BINDING PROTEIN MGLA"/>
    <property type="match status" value="1"/>
</dbReference>
<dbReference type="Pfam" id="PF00005">
    <property type="entry name" value="ABC_tran"/>
    <property type="match status" value="2"/>
</dbReference>
<dbReference type="SMART" id="SM00382">
    <property type="entry name" value="AAA"/>
    <property type="match status" value="2"/>
</dbReference>
<dbReference type="SUPFAM" id="SSF52540">
    <property type="entry name" value="P-loop containing nucleoside triphosphate hydrolases"/>
    <property type="match status" value="2"/>
</dbReference>
<dbReference type="PROSITE" id="PS00211">
    <property type="entry name" value="ABC_TRANSPORTER_1"/>
    <property type="match status" value="1"/>
</dbReference>
<dbReference type="PROSITE" id="PS50893">
    <property type="entry name" value="ABC_TRANSPORTER_2"/>
    <property type="match status" value="2"/>
</dbReference>
<dbReference type="PROSITE" id="PS51260">
    <property type="entry name" value="MGLA"/>
    <property type="match status" value="1"/>
</dbReference>
<organism>
    <name type="scientific">Haemophilus influenzae (strain 86-028NP)</name>
    <dbReference type="NCBI Taxonomy" id="281310"/>
    <lineage>
        <taxon>Bacteria</taxon>
        <taxon>Pseudomonadati</taxon>
        <taxon>Pseudomonadota</taxon>
        <taxon>Gammaproteobacteria</taxon>
        <taxon>Pasteurellales</taxon>
        <taxon>Pasteurellaceae</taxon>
        <taxon>Haemophilus</taxon>
    </lineage>
</organism>
<keyword id="KW-0067">ATP-binding</keyword>
<keyword id="KW-0997">Cell inner membrane</keyword>
<keyword id="KW-1003">Cell membrane</keyword>
<keyword id="KW-0472">Membrane</keyword>
<keyword id="KW-0547">Nucleotide-binding</keyword>
<keyword id="KW-0677">Repeat</keyword>
<keyword id="KW-0762">Sugar transport</keyword>
<keyword id="KW-1278">Translocase</keyword>
<keyword id="KW-0813">Transport</keyword>
<evidence type="ECO:0000255" key="1">
    <source>
        <dbReference type="HAMAP-Rule" id="MF_01717"/>
    </source>
</evidence>
<feature type="chain" id="PRO_0000261368" description="Galactose/methyl galactoside import ATP-binding protein MglA">
    <location>
        <begin position="1"/>
        <end position="506"/>
    </location>
</feature>
<feature type="domain" description="ABC transporter 1" evidence="1">
    <location>
        <begin position="14"/>
        <end position="249"/>
    </location>
</feature>
<feature type="domain" description="ABC transporter 2" evidence="1">
    <location>
        <begin position="260"/>
        <end position="506"/>
    </location>
</feature>
<feature type="binding site" evidence="1">
    <location>
        <begin position="46"/>
        <end position="53"/>
    </location>
    <ligand>
        <name>ATP</name>
        <dbReference type="ChEBI" id="CHEBI:30616"/>
    </ligand>
</feature>
<gene>
    <name evidence="1" type="primary">mglA</name>
    <name type="ordered locus">NTHI0988</name>
</gene>
<proteinExistence type="inferred from homology"/>
<name>MGLA_HAEI8</name>
<accession>Q4QM77</accession>
<protein>
    <recommendedName>
        <fullName evidence="1">Galactose/methyl galactoside import ATP-binding protein MglA</fullName>
        <ecNumber evidence="1">7.5.2.11</ecNumber>
    </recommendedName>
</protein>
<comment type="function">
    <text evidence="1">Part of the ABC transporter complex MglABC involved in galactose/methyl galactoside import. Responsible for energy coupling to the transport system.</text>
</comment>
<comment type="catalytic activity">
    <reaction evidence="1">
        <text>D-galactose(out) + ATP + H2O = D-galactose(in) + ADP + phosphate + H(+)</text>
        <dbReference type="Rhea" id="RHEA:60156"/>
        <dbReference type="ChEBI" id="CHEBI:4139"/>
        <dbReference type="ChEBI" id="CHEBI:15377"/>
        <dbReference type="ChEBI" id="CHEBI:15378"/>
        <dbReference type="ChEBI" id="CHEBI:30616"/>
        <dbReference type="ChEBI" id="CHEBI:43474"/>
        <dbReference type="ChEBI" id="CHEBI:456216"/>
        <dbReference type="EC" id="7.5.2.11"/>
    </reaction>
    <physiologicalReaction direction="left-to-right" evidence="1">
        <dbReference type="Rhea" id="RHEA:60157"/>
    </physiologicalReaction>
</comment>
<comment type="catalytic activity">
    <reaction evidence="1">
        <text>methyl beta-D-galactoside(out) + ATP + H2O = methyl beta-D-galactoside(in) + ADP + phosphate + H(+)</text>
        <dbReference type="Rhea" id="RHEA:72531"/>
        <dbReference type="ChEBI" id="CHEBI:15377"/>
        <dbReference type="ChEBI" id="CHEBI:15378"/>
        <dbReference type="ChEBI" id="CHEBI:17540"/>
        <dbReference type="ChEBI" id="CHEBI:30616"/>
        <dbReference type="ChEBI" id="CHEBI:43474"/>
        <dbReference type="ChEBI" id="CHEBI:456216"/>
    </reaction>
    <physiologicalReaction direction="left-to-right" evidence="1">
        <dbReference type="Rhea" id="RHEA:72532"/>
    </physiologicalReaction>
</comment>
<comment type="subunit">
    <text evidence="1">The complex is composed of one ATP-binding protein (MglA), two transmembrane proteins (MglC) and a solute-binding protein (MglB).</text>
</comment>
<comment type="subcellular location">
    <subcellularLocation>
        <location evidence="1">Cell inner membrane</location>
        <topology evidence="1">Peripheral membrane protein</topology>
    </subcellularLocation>
</comment>
<comment type="similarity">
    <text evidence="1">Belongs to the ABC transporter superfamily. Galactose/methyl galactoside importer (TC 3.A.1.2.3) family.</text>
</comment>
<sequence length="506" mass="56568">MTAQTQCQDSQVLLTMTNVCKSFPGVKALDNANLTVRSHSVHALMGENGAGKSTLLKCLFGIYAKDEGEILFLGEPVNFKTSKEALENGISMVHQELNLVRQTSVMDNLWLGRYPLKGPFVDHAKMYRDTKAIFDELDIDVDPKEKVAKLSVSQMQMIEIAKAFSYNAKIVIMDEPTSSLSEKEVEHLFKIIDKLKQRGCGIIYISHKMDEIFKICDEITILRDGKWINTVNVKESTMEQIVGMMVGRELTQRFPEKTNVPKEVILQVENLTAKNQPSIQDVSFELRKGEILGIAGLVGAKRTDIVEAIFGVRELIEGTIKLHGKTVKNHTALEAINNGFALVTEERRSTGIYSNLSIEFNSLISNMKSYLTPWKLLSTKKMKSDTQWVIDSMNVKTPSHRTTIGSLSGGNQQKVIIGRWLLTQPEILMLDEPTRGIDIGAKFEIYQLIQELAKKDKGIIMISSEMPELLGVTDRILVMSNGKLAGIVESAKTSQEEILQLAAKYL</sequence>
<reference key="1">
    <citation type="journal article" date="2005" name="J. Bacteriol.">
        <title>Genomic sequence of an otitis media isolate of nontypeable Haemophilus influenzae: comparative study with H. influenzae serotype d, strain KW20.</title>
        <authorList>
            <person name="Harrison A."/>
            <person name="Dyer D.W."/>
            <person name="Gillaspy A."/>
            <person name="Ray W.C."/>
            <person name="Mungur R."/>
            <person name="Carson M.B."/>
            <person name="Zhong H."/>
            <person name="Gipson J."/>
            <person name="Gipson M."/>
            <person name="Johnson L.S."/>
            <person name="Lewis L."/>
            <person name="Bakaletz L.O."/>
            <person name="Munson R.S. Jr."/>
        </authorList>
    </citation>
    <scope>NUCLEOTIDE SEQUENCE [LARGE SCALE GENOMIC DNA]</scope>
    <source>
        <strain>86-028NP</strain>
    </source>
</reference>